<keyword id="KW-0002">3D-structure</keyword>
<keyword id="KW-0037">Angiogenesis</keyword>
<keyword id="KW-0106">Calcium</keyword>
<keyword id="KW-1003">Cell membrane</keyword>
<keyword id="KW-0963">Cytoplasm</keyword>
<keyword id="KW-0217">Developmental protein</keyword>
<keyword id="KW-0221">Differentiation</keyword>
<keyword id="KW-1015">Disulfide bond</keyword>
<keyword id="KW-0325">Glycoprotein</keyword>
<keyword id="KW-0357">Heparan sulfate</keyword>
<keyword id="KW-0358">Heparin-binding</keyword>
<keyword id="KW-0472">Membrane</keyword>
<keyword id="KW-0479">Metal-binding</keyword>
<keyword id="KW-0496">Mitochondrion</keyword>
<keyword id="KW-0524">Neurogenesis</keyword>
<keyword id="KW-0597">Phosphoprotein</keyword>
<keyword id="KW-0654">Proteoglycan</keyword>
<keyword id="KW-0675">Receptor</keyword>
<keyword id="KW-1185">Reference proteome</keyword>
<keyword id="KW-0677">Repeat</keyword>
<keyword id="KW-0732">Signal</keyword>
<keyword id="KW-0812">Transmembrane</keyword>
<keyword id="KW-1133">Transmembrane helix</keyword>
<feature type="signal peptide" evidence="2">
    <location>
        <begin position="1"/>
        <end position="21"/>
    </location>
</feature>
<feature type="chain" id="PRO_0000021860" description="Neuropilin-1">
    <location>
        <begin position="22"/>
        <end position="923"/>
    </location>
</feature>
<feature type="topological domain" description="Extracellular" evidence="2">
    <location>
        <begin position="22"/>
        <end position="856"/>
    </location>
</feature>
<feature type="transmembrane region" description="Helical" evidence="2">
    <location>
        <begin position="857"/>
        <end position="879"/>
    </location>
</feature>
<feature type="topological domain" description="Cytoplasmic" evidence="2">
    <location>
        <begin position="880"/>
        <end position="923"/>
    </location>
</feature>
<feature type="domain" description="CUB 1" evidence="3">
    <location>
        <begin position="27"/>
        <end position="141"/>
    </location>
</feature>
<feature type="domain" description="CUB 2" evidence="3">
    <location>
        <begin position="147"/>
        <end position="265"/>
    </location>
</feature>
<feature type="domain" description="F5/8 type C 1" evidence="4">
    <location>
        <begin position="275"/>
        <end position="424"/>
    </location>
</feature>
<feature type="domain" description="F5/8 type C 2" evidence="4">
    <location>
        <begin position="431"/>
        <end position="583"/>
    </location>
</feature>
<feature type="domain" description="MAM" evidence="5">
    <location>
        <begin position="645"/>
        <end position="811"/>
    </location>
</feature>
<feature type="region of interest" description="Disordered" evidence="6">
    <location>
        <begin position="820"/>
        <end position="845"/>
    </location>
</feature>
<feature type="binding site" evidence="1">
    <location>
        <position position="195"/>
    </location>
    <ligand>
        <name>Ca(2+)</name>
        <dbReference type="ChEBI" id="CHEBI:29108"/>
    </ligand>
</feature>
<feature type="binding site" evidence="1">
    <location>
        <position position="209"/>
    </location>
    <ligand>
        <name>Ca(2+)</name>
        <dbReference type="ChEBI" id="CHEBI:29108"/>
    </ligand>
</feature>
<feature type="binding site" evidence="1">
    <location>
        <position position="250"/>
    </location>
    <ligand>
        <name>Ca(2+)</name>
        <dbReference type="ChEBI" id="CHEBI:29108"/>
    </ligand>
</feature>
<feature type="modified residue" description="Phosphoserine" evidence="13">
    <location>
        <position position="894"/>
    </location>
</feature>
<feature type="glycosylation site" description="N-linked (GlcNAc...) asparagine" evidence="2">
    <location>
        <position position="150"/>
    </location>
</feature>
<feature type="glycosylation site" description="N-linked (GlcNAc...) asparagine" evidence="7">
    <location>
        <position position="261"/>
    </location>
</feature>
<feature type="glycosylation site" description="N-linked (GlcNAc...) asparagine" evidence="2">
    <location>
        <position position="300"/>
    </location>
</feature>
<feature type="glycosylation site" description="N-linked (GlcNAc...) asparagine" evidence="7">
    <location>
        <position position="522"/>
    </location>
</feature>
<feature type="glycosylation site" description="O-linked (Xyl...) (chondroitin sulfate) serine; alternate" evidence="1">
    <location>
        <position position="612"/>
    </location>
</feature>
<feature type="glycosylation site" description="O-linked (Xyl...) (heparan sulfate) serine; alternate" evidence="1">
    <location>
        <position position="612"/>
    </location>
</feature>
<feature type="glycosylation site" description="O-linked (Xyl...) (chondroitin sulfate) serine" evidence="1">
    <location>
        <position position="829"/>
    </location>
</feature>
<feature type="glycosylation site" description="N-linked (GlcNAc...) asparagine" evidence="2">
    <location>
        <position position="842"/>
    </location>
</feature>
<feature type="disulfide bond" evidence="1">
    <location>
        <begin position="27"/>
        <end position="54"/>
    </location>
</feature>
<feature type="disulfide bond" evidence="1">
    <location>
        <begin position="82"/>
        <end position="104"/>
    </location>
</feature>
<feature type="disulfide bond" evidence="1">
    <location>
        <begin position="147"/>
        <end position="173"/>
    </location>
</feature>
<feature type="disulfide bond" evidence="1">
    <location>
        <begin position="206"/>
        <end position="228"/>
    </location>
</feature>
<feature type="disulfide bond" evidence="1">
    <location>
        <begin position="275"/>
        <end position="424"/>
    </location>
</feature>
<feature type="disulfide bond" evidence="1">
    <location>
        <begin position="431"/>
        <end position="583"/>
    </location>
</feature>
<feature type="sequence conflict" description="In Ref. 1; BAA08789." evidence="11" ref="1">
    <original>M</original>
    <variation>I</variation>
    <location>
        <position position="68"/>
    </location>
</feature>
<feature type="sequence conflict" description="In Ref. 1; BAA08789." evidence="11" ref="1">
    <original>S</original>
    <variation>C</variation>
    <location>
        <position position="170"/>
    </location>
</feature>
<feature type="sequence conflict" description="In Ref. 1; BAA08789." evidence="11" ref="1">
    <original>D</original>
    <variation>H</variation>
    <location>
        <position position="601"/>
    </location>
</feature>
<feature type="strand" evidence="14">
    <location>
        <begin position="27"/>
        <end position="32"/>
    </location>
</feature>
<feature type="strand" evidence="14">
    <location>
        <begin position="37"/>
        <end position="40"/>
    </location>
</feature>
<feature type="turn" evidence="14">
    <location>
        <begin position="42"/>
        <end position="46"/>
    </location>
</feature>
<feature type="strand" evidence="14">
    <location>
        <begin position="53"/>
        <end position="59"/>
    </location>
</feature>
<feature type="strand" evidence="14">
    <location>
        <begin position="67"/>
        <end position="71"/>
    </location>
</feature>
<feature type="helix" evidence="14">
    <location>
        <begin position="80"/>
        <end position="82"/>
    </location>
</feature>
<feature type="strand" evidence="14">
    <location>
        <begin position="84"/>
        <end position="94"/>
    </location>
</feature>
<feature type="strand" evidence="14">
    <location>
        <begin position="97"/>
        <end position="103"/>
    </location>
</feature>
<feature type="strand" evidence="14">
    <location>
        <begin position="105"/>
        <end position="107"/>
    </location>
</feature>
<feature type="strand" evidence="14">
    <location>
        <begin position="115"/>
        <end position="124"/>
    </location>
</feature>
<feature type="strand" evidence="14">
    <location>
        <begin position="135"/>
        <end position="140"/>
    </location>
</feature>
<feature type="strand" evidence="14">
    <location>
        <begin position="146"/>
        <end position="151"/>
    </location>
</feature>
<feature type="strand" evidence="14">
    <location>
        <begin position="153"/>
        <end position="159"/>
    </location>
</feature>
<feature type="turn" evidence="14">
    <location>
        <begin position="161"/>
        <end position="164"/>
    </location>
</feature>
<feature type="strand" evidence="14">
    <location>
        <begin position="172"/>
        <end position="178"/>
    </location>
</feature>
<feature type="helix" evidence="14">
    <location>
        <begin position="180"/>
        <end position="182"/>
    </location>
</feature>
<feature type="strand" evidence="14">
    <location>
        <begin position="185"/>
        <end position="193"/>
    </location>
</feature>
<feature type="strand" evidence="14">
    <location>
        <begin position="208"/>
        <end position="217"/>
    </location>
</feature>
<feature type="turn" evidence="14">
    <location>
        <begin position="218"/>
        <end position="220"/>
    </location>
</feature>
<feature type="strand" evidence="14">
    <location>
        <begin position="223"/>
        <end position="227"/>
    </location>
</feature>
<feature type="strand" evidence="14">
    <location>
        <begin position="229"/>
        <end position="231"/>
    </location>
</feature>
<feature type="strand" evidence="14">
    <location>
        <begin position="236"/>
        <end position="238"/>
    </location>
</feature>
<feature type="strand" evidence="14">
    <location>
        <begin position="240"/>
        <end position="248"/>
    </location>
</feature>
<feature type="strand" evidence="14">
    <location>
        <begin position="257"/>
        <end position="264"/>
    </location>
</feature>
<feature type="turn" evidence="14">
    <location>
        <begin position="281"/>
        <end position="283"/>
    </location>
</feature>
<feature type="strand" evidence="14">
    <location>
        <begin position="284"/>
        <end position="286"/>
    </location>
</feature>
<feature type="helix" evidence="14">
    <location>
        <begin position="288"/>
        <end position="290"/>
    </location>
</feature>
<feature type="strand" evidence="14">
    <location>
        <begin position="291"/>
        <end position="294"/>
    </location>
</feature>
<feature type="helix" evidence="14">
    <location>
        <begin position="299"/>
        <end position="301"/>
    </location>
</feature>
<feature type="helix" evidence="14">
    <location>
        <begin position="303"/>
        <end position="305"/>
    </location>
</feature>
<feature type="strand" evidence="14">
    <location>
        <begin position="326"/>
        <end position="342"/>
    </location>
</feature>
<feature type="turn" evidence="14">
    <location>
        <begin position="347"/>
        <end position="349"/>
    </location>
</feature>
<feature type="strand" evidence="14">
    <location>
        <begin position="352"/>
        <end position="368"/>
    </location>
</feature>
<feature type="strand" evidence="14">
    <location>
        <begin position="373"/>
        <end position="378"/>
    </location>
</feature>
<feature type="strand" evidence="14">
    <location>
        <begin position="385"/>
        <end position="389"/>
    </location>
</feature>
<feature type="strand" evidence="14">
    <location>
        <begin position="391"/>
        <end position="414"/>
    </location>
</feature>
<feature type="strand" evidence="14">
    <location>
        <begin position="417"/>
        <end position="424"/>
    </location>
</feature>
<feature type="helix" evidence="14">
    <location>
        <begin position="426"/>
        <end position="428"/>
    </location>
</feature>
<feature type="strand" evidence="14">
    <location>
        <begin position="429"/>
        <end position="431"/>
    </location>
</feature>
<feature type="turn" evidence="14">
    <location>
        <begin position="437"/>
        <end position="439"/>
    </location>
</feature>
<feature type="strand" evidence="14">
    <location>
        <begin position="440"/>
        <end position="442"/>
    </location>
</feature>
<feature type="helix" evidence="14">
    <location>
        <begin position="444"/>
        <end position="446"/>
    </location>
</feature>
<feature type="strand" evidence="14">
    <location>
        <begin position="447"/>
        <end position="449"/>
    </location>
</feature>
<feature type="turn" evidence="14">
    <location>
        <begin position="450"/>
        <end position="453"/>
    </location>
</feature>
<feature type="helix" evidence="14">
    <location>
        <begin position="459"/>
        <end position="462"/>
    </location>
</feature>
<feature type="turn" evidence="14">
    <location>
        <begin position="464"/>
        <end position="466"/>
    </location>
</feature>
<feature type="strand" evidence="14">
    <location>
        <begin position="471"/>
        <end position="473"/>
    </location>
</feature>
<feature type="strand" evidence="14">
    <location>
        <begin position="485"/>
        <end position="501"/>
    </location>
</feature>
<feature type="strand" evidence="14">
    <location>
        <begin position="503"/>
        <end position="507"/>
    </location>
</feature>
<feature type="strand" evidence="14">
    <location>
        <begin position="512"/>
        <end position="525"/>
    </location>
</feature>
<feature type="strand" evidence="14">
    <location>
        <begin position="534"/>
        <end position="537"/>
    </location>
</feature>
<feature type="strand" evidence="14">
    <location>
        <begin position="544"/>
        <end position="547"/>
    </location>
</feature>
<feature type="strand" evidence="14">
    <location>
        <begin position="550"/>
        <end position="570"/>
    </location>
</feature>
<feature type="strand" evidence="14">
    <location>
        <begin position="573"/>
        <end position="583"/>
    </location>
</feature>
<evidence type="ECO:0000250" key="1">
    <source>
        <dbReference type="UniProtKB" id="O14786"/>
    </source>
</evidence>
<evidence type="ECO:0000255" key="2"/>
<evidence type="ECO:0000255" key="3">
    <source>
        <dbReference type="PROSITE-ProRule" id="PRU00059"/>
    </source>
</evidence>
<evidence type="ECO:0000255" key="4">
    <source>
        <dbReference type="PROSITE-ProRule" id="PRU00081"/>
    </source>
</evidence>
<evidence type="ECO:0000255" key="5">
    <source>
        <dbReference type="PROSITE-ProRule" id="PRU00128"/>
    </source>
</evidence>
<evidence type="ECO:0000256" key="6">
    <source>
        <dbReference type="SAM" id="MobiDB-lite"/>
    </source>
</evidence>
<evidence type="ECO:0000269" key="7">
    <source>
    </source>
</evidence>
<evidence type="ECO:0000269" key="8">
    <source>
    </source>
</evidence>
<evidence type="ECO:0000269" key="9">
    <source>
    </source>
</evidence>
<evidence type="ECO:0000269" key="10">
    <source>
    </source>
</evidence>
<evidence type="ECO:0000305" key="11"/>
<evidence type="ECO:0000312" key="12">
    <source>
        <dbReference type="MGI" id="MGI:106206"/>
    </source>
</evidence>
<evidence type="ECO:0007744" key="13">
    <source>
    </source>
</evidence>
<evidence type="ECO:0007829" key="14">
    <source>
        <dbReference type="PDB" id="4GZ9"/>
    </source>
</evidence>
<gene>
    <name evidence="12" type="primary">Nrp1</name>
    <name type="synonym">Nrp</name>
</gene>
<comment type="function">
    <text evidence="1 9">Receptor involved in the development of the cardiovascular system, in angiogenesis, in the formation of certain neuronal circuits and in organogenesis outside the nervous system (By similarity). Mediates the chemorepulsant activity of semaphorins (PubMed:26503042). Recognizes a C-end rule (CendR) motif R/KXXR/K on its ligands which causes cellular internalization and vascular leakage (By similarity). Binds to semaphorin 3A (SEMA3A), the PLGF-2 isoform of PGF, the VEGF165 isoform of VEGFA and VEGFB (By similarity). Coexpression with KDR results in increased VEGF165 binding to KDR as well as increased chemotaxis. Regulates VEGF-induced angiogenesis (By similarity). Binding to VEGFA initiates a signaling pathway needed for motor neuron axon guidance and cell body migration, including for the caudal migration of facial motor neurons from rhombomere 4 to rhombomere 6 during embryonic development (PubMed:26503042). Regulates mitochondrial iron transport via interaction with ABCB8/MITOSUR (By similarity).</text>
</comment>
<comment type="subunit">
    <text evidence="1 8 9">Homodimer, and heterodimer with NRP2 (By similarity). Binds PLXNB1 (By similarity). Interacts with FER (PubMed:20133938). Interacts with VEGFA (PubMed:26503042). Interacts with ABCB8/MITOSUR in mitochondria (By similarity).</text>
</comment>
<comment type="interaction">
    <interactant intactId="EBI-1555129">
        <id>P97333</id>
    </interactant>
    <interactant intactId="EBI-771260">
        <id>P70206</id>
        <label>Plxna1</label>
    </interactant>
    <organismsDiffer>false</organismsDiffer>
    <experiments>4</experiments>
</comment>
<comment type="interaction">
    <interactant intactId="EBI-1555129">
        <id>P97333</id>
    </interactant>
    <interactant intactId="EBI-771272">
        <id>P70207</id>
        <label>Plxna2</label>
    </interactant>
    <organismsDiffer>false</organismsDiffer>
    <experiments>3</experiments>
</comment>
<comment type="interaction">
    <interactant intactId="EBI-1555129">
        <id>P97333</id>
    </interactant>
    <interactant intactId="EBI-77070">
        <id>P34152</id>
        <label>Ptk2</label>
    </interactant>
    <organismsDiffer>false</organismsDiffer>
    <experiments>2</experiments>
</comment>
<comment type="interaction">
    <interactant intactId="EBI-1555129">
        <id>P97333</id>
    </interactant>
    <interactant intactId="EBI-8586029">
        <id>O08665</id>
        <label>Sema3a</label>
    </interactant>
    <organismsDiffer>false</organismsDiffer>
    <experiments>3</experiments>
</comment>
<comment type="interaction">
    <interactant intactId="EBI-1555129">
        <id>P97333</id>
    </interactant>
    <interactant intactId="EBI-1382311">
        <id>P08648</id>
        <label>ITGA5</label>
    </interactant>
    <organismsDiffer>true</organismsDiffer>
    <experiments>3</experiments>
</comment>
<comment type="subcellular location">
    <subcellularLocation>
        <location evidence="1">Mitochondrion membrane</location>
        <topology evidence="2">Single-pass type I membrane protein</topology>
    </subcellularLocation>
    <subcellularLocation>
        <location evidence="1">Cell membrane</location>
        <topology evidence="2">Single-pass type I membrane protein</topology>
    </subcellularLocation>
    <subcellularLocation>
        <location evidence="1">Cytoplasm</location>
    </subcellularLocation>
</comment>
<comment type="tissue specificity">
    <text>Nervous system.</text>
</comment>
<comment type="domain">
    <text evidence="1">The tandem CUB domains mediate binding to semaphorin, while the tandem F5/8 domains are responsible for heparin and VEGF binding. F5/8 domains mediate the recognition and binding to R/KXXR/K CendR motifs.</text>
</comment>
<comment type="disruption phenotype">
    <text evidence="10">Knockout embryos display higher susceptibility to oxidative stress in endothelium cells located in the intersomitic vessels.</text>
</comment>
<comment type="similarity">
    <text evidence="11">Belongs to the neuropilin family.</text>
</comment>
<accession>P97333</accession>
<accession>Q6PAR3</accession>
<name>NRP1_MOUSE</name>
<dbReference type="EMBL" id="D50086">
    <property type="protein sequence ID" value="BAA08789.1"/>
    <property type="molecule type" value="mRNA"/>
</dbReference>
<dbReference type="EMBL" id="CH466525">
    <property type="protein sequence ID" value="EDL11828.1"/>
    <property type="molecule type" value="Genomic_DNA"/>
</dbReference>
<dbReference type="EMBL" id="BC060129">
    <property type="protein sequence ID" value="AAH60129.1"/>
    <property type="molecule type" value="mRNA"/>
</dbReference>
<dbReference type="CCDS" id="CCDS22790.1"/>
<dbReference type="RefSeq" id="NP_032763.2">
    <property type="nucleotide sequence ID" value="NM_008737.3"/>
</dbReference>
<dbReference type="RefSeq" id="XP_006530829.1">
    <property type="nucleotide sequence ID" value="XM_006530766.3"/>
</dbReference>
<dbReference type="PDB" id="4GZ9">
    <property type="method" value="X-ray"/>
    <property type="resolution" value="2.70 A"/>
    <property type="chains" value="A=22-586"/>
</dbReference>
<dbReference type="PDB" id="4GZA">
    <property type="method" value="X-ray"/>
    <property type="resolution" value="7.00 A"/>
    <property type="chains" value="H=22-586"/>
</dbReference>
<dbReference type="PDB" id="7M0R">
    <property type="method" value="EM"/>
    <property type="resolution" value="3.70 A"/>
    <property type="chains" value="E/F=22-588"/>
</dbReference>
<dbReference type="PDBsum" id="4GZ9"/>
<dbReference type="PDBsum" id="4GZA"/>
<dbReference type="PDBsum" id="7M0R"/>
<dbReference type="EMDB" id="EMD-23613"/>
<dbReference type="SMR" id="P97333"/>
<dbReference type="BioGRID" id="201848">
    <property type="interactions" value="27"/>
</dbReference>
<dbReference type="CORUM" id="P97333"/>
<dbReference type="DIP" id="DIP-39360N"/>
<dbReference type="FunCoup" id="P97333">
    <property type="interactions" value="661"/>
</dbReference>
<dbReference type="IntAct" id="P97333">
    <property type="interactions" value="16"/>
</dbReference>
<dbReference type="MINT" id="P97333"/>
<dbReference type="STRING" id="10090.ENSMUSP00000026917"/>
<dbReference type="GlyConnect" id="2556">
    <property type="glycosylation" value="1 N-Linked glycan (1 site)"/>
</dbReference>
<dbReference type="GlyCosmos" id="P97333">
    <property type="glycosylation" value="6 sites, 1 glycan"/>
</dbReference>
<dbReference type="GlyGen" id="P97333">
    <property type="glycosylation" value="10 sites, 5 N-linked glycans (4 sites), 1 O-linked glycan (1 site)"/>
</dbReference>
<dbReference type="iPTMnet" id="P97333"/>
<dbReference type="PhosphoSitePlus" id="P97333"/>
<dbReference type="SwissPalm" id="P97333"/>
<dbReference type="CPTAC" id="non-CPTAC-3597"/>
<dbReference type="CPTAC" id="non-CPTAC-3661"/>
<dbReference type="PaxDb" id="10090-ENSMUSP00000026917"/>
<dbReference type="PeptideAtlas" id="P97333"/>
<dbReference type="ProteomicsDB" id="293739"/>
<dbReference type="Pumba" id="P97333"/>
<dbReference type="TopDownProteomics" id="P97333"/>
<dbReference type="ABCD" id="P97333">
    <property type="antibodies" value="6 sequenced antibodies"/>
</dbReference>
<dbReference type="Antibodypedia" id="3859">
    <property type="antibodies" value="938 antibodies from 42 providers"/>
</dbReference>
<dbReference type="DNASU" id="18186"/>
<dbReference type="Ensembl" id="ENSMUST00000026917.10">
    <property type="protein sequence ID" value="ENSMUSP00000026917.9"/>
    <property type="gene ID" value="ENSMUSG00000025810.10"/>
</dbReference>
<dbReference type="GeneID" id="18186"/>
<dbReference type="KEGG" id="mmu:18186"/>
<dbReference type="UCSC" id="uc009nzr.2">
    <property type="organism name" value="mouse"/>
</dbReference>
<dbReference type="AGR" id="MGI:106206"/>
<dbReference type="CTD" id="8829"/>
<dbReference type="MGI" id="MGI:106206">
    <property type="gene designation" value="Nrp1"/>
</dbReference>
<dbReference type="VEuPathDB" id="HostDB:ENSMUSG00000025810"/>
<dbReference type="eggNOG" id="ENOG502QUEH">
    <property type="taxonomic scope" value="Eukaryota"/>
</dbReference>
<dbReference type="GeneTree" id="ENSGT00940000157169"/>
<dbReference type="HOGENOM" id="CLU_015228_6_1_1"/>
<dbReference type="InParanoid" id="P97333"/>
<dbReference type="OMA" id="QEDCTKP"/>
<dbReference type="OrthoDB" id="6155811at2759"/>
<dbReference type="PhylomeDB" id="P97333"/>
<dbReference type="TreeFam" id="TF316506"/>
<dbReference type="Reactome" id="R-MMU-194306">
    <property type="pathway name" value="Neurophilin interactions with VEGF and VEGFR"/>
</dbReference>
<dbReference type="Reactome" id="R-MMU-399954">
    <property type="pathway name" value="Sema3A PAK dependent Axon repulsion"/>
</dbReference>
<dbReference type="Reactome" id="R-MMU-399955">
    <property type="pathway name" value="SEMA3A-Plexin repulsion signaling by inhibiting Integrin adhesion"/>
</dbReference>
<dbReference type="Reactome" id="R-MMU-399956">
    <property type="pathway name" value="CRMPs in Sema3A signaling"/>
</dbReference>
<dbReference type="Reactome" id="R-MMU-445144">
    <property type="pathway name" value="Signal transduction by L1"/>
</dbReference>
<dbReference type="BioGRID-ORCS" id="18186">
    <property type="hits" value="4 hits in 77 CRISPR screens"/>
</dbReference>
<dbReference type="ChiTaRS" id="Nrp1">
    <property type="organism name" value="mouse"/>
</dbReference>
<dbReference type="EvolutionaryTrace" id="P97333"/>
<dbReference type="PRO" id="PR:P97333"/>
<dbReference type="Proteomes" id="UP000000589">
    <property type="component" value="Chromosome 8"/>
</dbReference>
<dbReference type="RNAct" id="P97333">
    <property type="molecule type" value="protein"/>
</dbReference>
<dbReference type="Bgee" id="ENSMUSG00000025810">
    <property type="expression patterns" value="Expressed in internal carotid artery and 273 other cell types or tissues"/>
</dbReference>
<dbReference type="GO" id="GO:0030424">
    <property type="term" value="C:axon"/>
    <property type="evidence" value="ECO:0000314"/>
    <property type="project" value="BHF-UCL"/>
</dbReference>
<dbReference type="GO" id="GO:0009986">
    <property type="term" value="C:cell surface"/>
    <property type="evidence" value="ECO:0007669"/>
    <property type="project" value="Ensembl"/>
</dbReference>
<dbReference type="GO" id="GO:0005829">
    <property type="term" value="C:cytosol"/>
    <property type="evidence" value="ECO:0007669"/>
    <property type="project" value="Ensembl"/>
</dbReference>
<dbReference type="GO" id="GO:0005769">
    <property type="term" value="C:early endosome"/>
    <property type="evidence" value="ECO:0000314"/>
    <property type="project" value="BHF-UCL"/>
</dbReference>
<dbReference type="GO" id="GO:0005925">
    <property type="term" value="C:focal adhesion"/>
    <property type="evidence" value="ECO:0000314"/>
    <property type="project" value="BHF-UCL"/>
</dbReference>
<dbReference type="GO" id="GO:0098978">
    <property type="term" value="C:glutamatergic synapse"/>
    <property type="evidence" value="ECO:0000314"/>
    <property type="project" value="SynGO"/>
</dbReference>
<dbReference type="GO" id="GO:0030426">
    <property type="term" value="C:growth cone"/>
    <property type="evidence" value="ECO:0007669"/>
    <property type="project" value="Ensembl"/>
</dbReference>
<dbReference type="GO" id="GO:0031966">
    <property type="term" value="C:mitochondrial membrane"/>
    <property type="evidence" value="ECO:0007669"/>
    <property type="project" value="UniProtKB-SubCell"/>
</dbReference>
<dbReference type="GO" id="GO:0005883">
    <property type="term" value="C:neurofilament"/>
    <property type="evidence" value="ECO:0000314"/>
    <property type="project" value="MGI"/>
</dbReference>
<dbReference type="GO" id="GO:0043005">
    <property type="term" value="C:neuron projection"/>
    <property type="evidence" value="ECO:0000314"/>
    <property type="project" value="ARUK-UCL"/>
</dbReference>
<dbReference type="GO" id="GO:0043025">
    <property type="term" value="C:neuronal cell body"/>
    <property type="evidence" value="ECO:0007669"/>
    <property type="project" value="Ensembl"/>
</dbReference>
<dbReference type="GO" id="GO:0005886">
    <property type="term" value="C:plasma membrane"/>
    <property type="evidence" value="ECO:0000314"/>
    <property type="project" value="BHF-UCL"/>
</dbReference>
<dbReference type="GO" id="GO:0045211">
    <property type="term" value="C:postsynaptic membrane"/>
    <property type="evidence" value="ECO:0000314"/>
    <property type="project" value="SynGO"/>
</dbReference>
<dbReference type="GO" id="GO:0097443">
    <property type="term" value="C:sorting endosome"/>
    <property type="evidence" value="ECO:0000314"/>
    <property type="project" value="BHF-UCL"/>
</dbReference>
<dbReference type="GO" id="GO:0019838">
    <property type="term" value="F:growth factor binding"/>
    <property type="evidence" value="ECO:0000353"/>
    <property type="project" value="MGI"/>
</dbReference>
<dbReference type="GO" id="GO:0005096">
    <property type="term" value="F:GTPase activator activity"/>
    <property type="evidence" value="ECO:0007669"/>
    <property type="project" value="Ensembl"/>
</dbReference>
<dbReference type="GO" id="GO:0008201">
    <property type="term" value="F:heparin binding"/>
    <property type="evidence" value="ECO:0007669"/>
    <property type="project" value="UniProtKB-KW"/>
</dbReference>
<dbReference type="GO" id="GO:0046872">
    <property type="term" value="F:metal ion binding"/>
    <property type="evidence" value="ECO:0007669"/>
    <property type="project" value="UniProtKB-KW"/>
</dbReference>
<dbReference type="GO" id="GO:0019901">
    <property type="term" value="F:protein kinase binding"/>
    <property type="evidence" value="ECO:0000353"/>
    <property type="project" value="ARUK-UCL"/>
</dbReference>
<dbReference type="GO" id="GO:0017154">
    <property type="term" value="F:semaphorin receptor activity"/>
    <property type="evidence" value="ECO:0000314"/>
    <property type="project" value="MGI"/>
</dbReference>
<dbReference type="GO" id="GO:0038085">
    <property type="term" value="F:vascular endothelial growth factor binding"/>
    <property type="evidence" value="ECO:0000353"/>
    <property type="project" value="BHF-UCL"/>
</dbReference>
<dbReference type="GO" id="GO:0005021">
    <property type="term" value="F:vascular endothelial growth factor receptor activity"/>
    <property type="evidence" value="ECO:0000315"/>
    <property type="project" value="BHF-UCL"/>
</dbReference>
<dbReference type="GO" id="GO:0001525">
    <property type="term" value="P:angiogenesis"/>
    <property type="evidence" value="ECO:0000315"/>
    <property type="project" value="BHF-UCL"/>
</dbReference>
<dbReference type="GO" id="GO:0060978">
    <property type="term" value="P:angiogenesis involved in coronary vascular morphogenesis"/>
    <property type="evidence" value="ECO:0000315"/>
    <property type="project" value="BHF-UCL"/>
</dbReference>
<dbReference type="GO" id="GO:0048844">
    <property type="term" value="P:artery morphogenesis"/>
    <property type="evidence" value="ECO:0000315"/>
    <property type="project" value="BHF-UCL"/>
</dbReference>
<dbReference type="GO" id="GO:0048675">
    <property type="term" value="P:axon extension"/>
    <property type="evidence" value="ECO:0000316"/>
    <property type="project" value="MGI"/>
</dbReference>
<dbReference type="GO" id="GO:0048846">
    <property type="term" value="P:axon extension involved in axon guidance"/>
    <property type="evidence" value="ECO:0000314"/>
    <property type="project" value="MGI"/>
</dbReference>
<dbReference type="GO" id="GO:0007411">
    <property type="term" value="P:axon guidance"/>
    <property type="evidence" value="ECO:0000314"/>
    <property type="project" value="MGI"/>
</dbReference>
<dbReference type="GO" id="GO:0007413">
    <property type="term" value="P:axonal fasciculation"/>
    <property type="evidence" value="ECO:0000315"/>
    <property type="project" value="MGI"/>
</dbReference>
<dbReference type="GO" id="GO:0060385">
    <property type="term" value="P:axonogenesis involved in innervation"/>
    <property type="evidence" value="ECO:0000315"/>
    <property type="project" value="BHF-UCL"/>
</dbReference>
<dbReference type="GO" id="GO:0150020">
    <property type="term" value="P:basal dendrite arborization"/>
    <property type="evidence" value="ECO:0000316"/>
    <property type="project" value="ARUK-UCL"/>
</dbReference>
<dbReference type="GO" id="GO:0150018">
    <property type="term" value="P:basal dendrite development"/>
    <property type="evidence" value="ECO:0000315"/>
    <property type="project" value="ARUK-UCL"/>
</dbReference>
<dbReference type="GO" id="GO:0043534">
    <property type="term" value="P:blood vessel endothelial cell migration"/>
    <property type="evidence" value="ECO:0000315"/>
    <property type="project" value="MGI"/>
</dbReference>
<dbReference type="GO" id="GO:0001569">
    <property type="term" value="P:branching involved in blood vessel morphogenesis"/>
    <property type="evidence" value="ECO:0000315"/>
    <property type="project" value="BHF-UCL"/>
</dbReference>
<dbReference type="GO" id="GO:0021785">
    <property type="term" value="P:branchiomotor neuron axon guidance"/>
    <property type="evidence" value="ECO:0000315"/>
    <property type="project" value="ParkinsonsUK-UCL"/>
</dbReference>
<dbReference type="GO" id="GO:0060980">
    <property type="term" value="P:cell migration involved in coronary vasculogenesis"/>
    <property type="evidence" value="ECO:0000305"/>
    <property type="project" value="BHF-UCL"/>
</dbReference>
<dbReference type="GO" id="GO:0002042">
    <property type="term" value="P:cell migration involved in sprouting angiogenesis"/>
    <property type="evidence" value="ECO:0000315"/>
    <property type="project" value="BHF-UCL"/>
</dbReference>
<dbReference type="GO" id="GO:0035729">
    <property type="term" value="P:cellular response to hepatocyte growth factor stimulus"/>
    <property type="evidence" value="ECO:0007669"/>
    <property type="project" value="Ensembl"/>
</dbReference>
<dbReference type="GO" id="GO:0035924">
    <property type="term" value="P:cellular response to vascular endothelial growth factor stimulus"/>
    <property type="evidence" value="ECO:0000315"/>
    <property type="project" value="BHF-UCL"/>
</dbReference>
<dbReference type="GO" id="GO:0071679">
    <property type="term" value="P:commissural neuron axon guidance"/>
    <property type="evidence" value="ECO:0000315"/>
    <property type="project" value="BHF-UCL"/>
</dbReference>
<dbReference type="GO" id="GO:0060982">
    <property type="term" value="P:coronary artery morphogenesis"/>
    <property type="evidence" value="ECO:0000315"/>
    <property type="project" value="BHF-UCL"/>
</dbReference>
<dbReference type="GO" id="GO:0016358">
    <property type="term" value="P:dendrite development"/>
    <property type="evidence" value="ECO:0000315"/>
    <property type="project" value="MGI"/>
</dbReference>
<dbReference type="GO" id="GO:0060666">
    <property type="term" value="P:dichotomous subdivision of terminal units involved in salivary gland branching"/>
    <property type="evidence" value="ECO:0000315"/>
    <property type="project" value="MGI"/>
</dbReference>
<dbReference type="GO" id="GO:1904835">
    <property type="term" value="P:dorsal root ganglion morphogenesis"/>
    <property type="evidence" value="ECO:0000315"/>
    <property type="project" value="ParkinsonsUK-UCL"/>
</dbReference>
<dbReference type="GO" id="GO:0035767">
    <property type="term" value="P:endothelial cell chemotaxis"/>
    <property type="evidence" value="ECO:0007669"/>
    <property type="project" value="Ensembl"/>
</dbReference>
<dbReference type="GO" id="GO:0043542">
    <property type="term" value="P:endothelial cell migration"/>
    <property type="evidence" value="ECO:0000315"/>
    <property type="project" value="BHF-UCL"/>
</dbReference>
<dbReference type="GO" id="GO:0021612">
    <property type="term" value="P:facial nerve structural organization"/>
    <property type="evidence" value="ECO:0000315"/>
    <property type="project" value="ParkinsonsUK-UCL"/>
</dbReference>
<dbReference type="GO" id="GO:1903375">
    <property type="term" value="P:facioacoustic ganglion development"/>
    <property type="evidence" value="ECO:0000315"/>
    <property type="project" value="ParkinsonsUK-UCL"/>
</dbReference>
<dbReference type="GO" id="GO:0021828">
    <property type="term" value="P:gonadotrophin-releasing hormone neuronal migration to the hypothalamus"/>
    <property type="evidence" value="ECO:0000315"/>
    <property type="project" value="BHF-UCL"/>
</dbReference>
<dbReference type="GO" id="GO:0007507">
    <property type="term" value="P:heart development"/>
    <property type="evidence" value="ECO:0000316"/>
    <property type="project" value="MGI"/>
</dbReference>
<dbReference type="GO" id="GO:0048012">
    <property type="term" value="P:hepatocyte growth factor receptor signaling pathway"/>
    <property type="evidence" value="ECO:0007669"/>
    <property type="project" value="Ensembl"/>
</dbReference>
<dbReference type="GO" id="GO:0007229">
    <property type="term" value="P:integrin-mediated signaling pathway"/>
    <property type="evidence" value="ECO:0000315"/>
    <property type="project" value="BHF-UCL"/>
</dbReference>
<dbReference type="GO" id="GO:0008045">
    <property type="term" value="P:motor neuron axon guidance"/>
    <property type="evidence" value="ECO:0000315"/>
    <property type="project" value="ParkinsonsUK-UCL"/>
</dbReference>
<dbReference type="GO" id="GO:0097475">
    <property type="term" value="P:motor neuron migration"/>
    <property type="evidence" value="ECO:0000315"/>
    <property type="project" value="UniProtKB"/>
</dbReference>
<dbReference type="GO" id="GO:0030517">
    <property type="term" value="P:negative regulation of axon extension"/>
    <property type="evidence" value="ECO:0000316"/>
    <property type="project" value="MGI"/>
</dbReference>
<dbReference type="GO" id="GO:0048843">
    <property type="term" value="P:negative regulation of axon extension involved in axon guidance"/>
    <property type="evidence" value="ECO:0000314"/>
    <property type="project" value="MGI"/>
</dbReference>
<dbReference type="GO" id="GO:2001237">
    <property type="term" value="P:negative regulation of extrinsic apoptotic signaling pathway"/>
    <property type="evidence" value="ECO:0000315"/>
    <property type="project" value="BHF-UCL"/>
</dbReference>
<dbReference type="GO" id="GO:0043524">
    <property type="term" value="P:negative regulation of neuron apoptotic process"/>
    <property type="evidence" value="ECO:0000315"/>
    <property type="project" value="BHF-UCL"/>
</dbReference>
<dbReference type="GO" id="GO:1901166">
    <property type="term" value="P:neural crest cell migration involved in autonomic nervous system development"/>
    <property type="evidence" value="ECO:0000315"/>
    <property type="project" value="ParkinsonsUK-UCL"/>
</dbReference>
<dbReference type="GO" id="GO:0048666">
    <property type="term" value="P:neuron development"/>
    <property type="evidence" value="ECO:0000315"/>
    <property type="project" value="BHF-UCL"/>
</dbReference>
<dbReference type="GO" id="GO:0001764">
    <property type="term" value="P:neuron migration"/>
    <property type="evidence" value="ECO:0000315"/>
    <property type="project" value="BHF-UCL"/>
</dbReference>
<dbReference type="GO" id="GO:0038189">
    <property type="term" value="P:neuropilin signaling pathway"/>
    <property type="evidence" value="ECO:0000315"/>
    <property type="project" value="BHF-UCL"/>
</dbReference>
<dbReference type="GO" id="GO:1905040">
    <property type="term" value="P:otic placode development"/>
    <property type="evidence" value="ECO:0000315"/>
    <property type="project" value="ParkinsonsUK-UCL"/>
</dbReference>
<dbReference type="GO" id="GO:0003148">
    <property type="term" value="P:outflow tract septum morphogenesis"/>
    <property type="evidence" value="ECO:0000315"/>
    <property type="project" value="BHF-UCL"/>
</dbReference>
<dbReference type="GO" id="GO:0048008">
    <property type="term" value="P:platelet-derived growth factor receptor signaling pathway"/>
    <property type="evidence" value="ECO:0007669"/>
    <property type="project" value="Ensembl"/>
</dbReference>
<dbReference type="GO" id="GO:0050918">
    <property type="term" value="P:positive chemotaxis"/>
    <property type="evidence" value="ECO:0000315"/>
    <property type="project" value="BHF-UCL"/>
</dbReference>
<dbReference type="GO" id="GO:0045766">
    <property type="term" value="P:positive regulation of angiogenesis"/>
    <property type="evidence" value="ECO:0000315"/>
    <property type="project" value="BHF-UCL"/>
</dbReference>
<dbReference type="GO" id="GO:0048842">
    <property type="term" value="P:positive regulation of axon extension involved in axon guidance"/>
    <property type="evidence" value="ECO:0000315"/>
    <property type="project" value="BHF-UCL"/>
</dbReference>
<dbReference type="GO" id="GO:0090050">
    <property type="term" value="P:positive regulation of cell migration involved in sprouting angiogenesis"/>
    <property type="evidence" value="ECO:0000315"/>
    <property type="project" value="BHF-UCL"/>
</dbReference>
<dbReference type="GO" id="GO:0010595">
    <property type="term" value="P:positive regulation of endothelial cell migration"/>
    <property type="evidence" value="ECO:0000315"/>
    <property type="project" value="BHF-UCL"/>
</dbReference>
<dbReference type="GO" id="GO:0070374">
    <property type="term" value="P:positive regulation of ERK1 and ERK2 cascade"/>
    <property type="evidence" value="ECO:0000315"/>
    <property type="project" value="BHF-UCL"/>
</dbReference>
<dbReference type="GO" id="GO:0051491">
    <property type="term" value="P:positive regulation of filopodium assembly"/>
    <property type="evidence" value="ECO:0000315"/>
    <property type="project" value="BHF-UCL"/>
</dbReference>
<dbReference type="GO" id="GO:0051894">
    <property type="term" value="P:positive regulation of focal adhesion assembly"/>
    <property type="evidence" value="ECO:0007669"/>
    <property type="project" value="Ensembl"/>
</dbReference>
<dbReference type="GO" id="GO:0042327">
    <property type="term" value="P:positive regulation of phosphorylation"/>
    <property type="evidence" value="ECO:0000315"/>
    <property type="project" value="BHF-UCL"/>
</dbReference>
<dbReference type="GO" id="GO:0010641">
    <property type="term" value="P:positive regulation of platelet-derived growth factor receptor signaling pathway"/>
    <property type="evidence" value="ECO:0007669"/>
    <property type="project" value="Ensembl"/>
</dbReference>
<dbReference type="GO" id="GO:0071673">
    <property type="term" value="P:positive regulation of smooth muscle cell chemotaxis"/>
    <property type="evidence" value="ECO:0007669"/>
    <property type="project" value="Ensembl"/>
</dbReference>
<dbReference type="GO" id="GO:0051496">
    <property type="term" value="P:positive regulation of stress fiber assembly"/>
    <property type="evidence" value="ECO:0007669"/>
    <property type="project" value="Ensembl"/>
</dbReference>
<dbReference type="GO" id="GO:1900026">
    <property type="term" value="P:positive regulation of substrate adhesion-dependent cell spreading"/>
    <property type="evidence" value="ECO:0007669"/>
    <property type="project" value="Ensembl"/>
</dbReference>
<dbReference type="GO" id="GO:1904754">
    <property type="term" value="P:positive regulation of vascular associated smooth muscle cell migration"/>
    <property type="evidence" value="ECO:0007669"/>
    <property type="project" value="Ensembl"/>
</dbReference>
<dbReference type="GO" id="GO:0099173">
    <property type="term" value="P:postsynapse organization"/>
    <property type="evidence" value="ECO:0000314"/>
    <property type="project" value="SynGO"/>
</dbReference>
<dbReference type="GO" id="GO:1902946">
    <property type="term" value="P:protein localization to early endosome"/>
    <property type="evidence" value="ECO:0000315"/>
    <property type="project" value="BHF-UCL"/>
</dbReference>
<dbReference type="GO" id="GO:0048841">
    <property type="term" value="P:regulation of axon extension involved in axon guidance"/>
    <property type="evidence" value="ECO:0000314"/>
    <property type="project" value="MGI"/>
</dbReference>
<dbReference type="GO" id="GO:0032489">
    <property type="term" value="P:regulation of Cdc42 protein signal transduction"/>
    <property type="evidence" value="ECO:0000315"/>
    <property type="project" value="BHF-UCL"/>
</dbReference>
<dbReference type="GO" id="GO:0061441">
    <property type="term" value="P:renal artery morphogenesis"/>
    <property type="evidence" value="ECO:0000315"/>
    <property type="project" value="BHF-UCL"/>
</dbReference>
<dbReference type="GO" id="GO:0061298">
    <property type="term" value="P:retina vasculature development in camera-type eye"/>
    <property type="evidence" value="ECO:0000315"/>
    <property type="project" value="MGI"/>
</dbReference>
<dbReference type="GO" id="GO:0061299">
    <property type="term" value="P:retina vasculature morphogenesis in camera-type eye"/>
    <property type="evidence" value="ECO:0000315"/>
    <property type="project" value="BHF-UCL"/>
</dbReference>
<dbReference type="GO" id="GO:0031290">
    <property type="term" value="P:retinal ganglion cell axon guidance"/>
    <property type="evidence" value="ECO:0000315"/>
    <property type="project" value="BHF-UCL"/>
</dbReference>
<dbReference type="GO" id="GO:0071526">
    <property type="term" value="P:semaphorin-plexin signaling pathway"/>
    <property type="evidence" value="ECO:0000314"/>
    <property type="project" value="MGI"/>
</dbReference>
<dbReference type="GO" id="GO:0097374">
    <property type="term" value="P:sensory neuron axon guidance"/>
    <property type="evidence" value="ECO:0000315"/>
    <property type="project" value="ParkinsonsUK-UCL"/>
</dbReference>
<dbReference type="GO" id="GO:0002040">
    <property type="term" value="P:sprouting angiogenesis"/>
    <property type="evidence" value="ECO:0000315"/>
    <property type="project" value="BHF-UCL"/>
</dbReference>
<dbReference type="GO" id="GO:0006930">
    <property type="term" value="P:substrate-dependent cell migration, cell extension"/>
    <property type="evidence" value="ECO:0007669"/>
    <property type="project" value="Ensembl"/>
</dbReference>
<dbReference type="GO" id="GO:0046718">
    <property type="term" value="P:symbiont entry into host cell"/>
    <property type="evidence" value="ECO:0007669"/>
    <property type="project" value="Ensembl"/>
</dbReference>
<dbReference type="GO" id="GO:0061549">
    <property type="term" value="P:sympathetic ganglion development"/>
    <property type="evidence" value="ECO:0000315"/>
    <property type="project" value="BHF-UCL"/>
</dbReference>
<dbReference type="GO" id="GO:0048485">
    <property type="term" value="P:sympathetic nervous system development"/>
    <property type="evidence" value="ECO:0000315"/>
    <property type="project" value="MGI"/>
</dbReference>
<dbReference type="GO" id="GO:0097490">
    <property type="term" value="P:sympathetic neuron projection extension"/>
    <property type="evidence" value="ECO:0000315"/>
    <property type="project" value="BHF-UCL"/>
</dbReference>
<dbReference type="GO" id="GO:0097491">
    <property type="term" value="P:sympathetic neuron projection guidance"/>
    <property type="evidence" value="ECO:0000315"/>
    <property type="project" value="BHF-UCL"/>
</dbReference>
<dbReference type="GO" id="GO:0061551">
    <property type="term" value="P:trigeminal ganglion development"/>
    <property type="evidence" value="ECO:0000315"/>
    <property type="project" value="ParkinsonsUK-UCL"/>
</dbReference>
<dbReference type="GO" id="GO:0021636">
    <property type="term" value="P:trigeminal nerve morphogenesis"/>
    <property type="evidence" value="ECO:0000315"/>
    <property type="project" value="MGI"/>
</dbReference>
<dbReference type="GO" id="GO:0021637">
    <property type="term" value="P:trigeminal nerve structural organization"/>
    <property type="evidence" value="ECO:0000315"/>
    <property type="project" value="ParkinsonsUK-UCL"/>
</dbReference>
<dbReference type="GO" id="GO:0048010">
    <property type="term" value="P:vascular endothelial growth factor receptor signaling pathway"/>
    <property type="evidence" value="ECO:0000315"/>
    <property type="project" value="BHF-UCL"/>
</dbReference>
<dbReference type="GO" id="GO:0038190">
    <property type="term" value="P:VEGF-activated neuropilin signaling pathway"/>
    <property type="evidence" value="ECO:0000315"/>
    <property type="project" value="BHF-UCL"/>
</dbReference>
<dbReference type="GO" id="GO:0036486">
    <property type="term" value="P:ventral trunk neural crest cell migration"/>
    <property type="evidence" value="ECO:0000315"/>
    <property type="project" value="ParkinsonsUK-UCL"/>
</dbReference>
<dbReference type="GO" id="GO:0021649">
    <property type="term" value="P:vestibulocochlear nerve structural organization"/>
    <property type="evidence" value="ECO:0000315"/>
    <property type="project" value="ParkinsonsUK-UCL"/>
</dbReference>
<dbReference type="GO" id="GO:0042060">
    <property type="term" value="P:wound healing"/>
    <property type="evidence" value="ECO:0007669"/>
    <property type="project" value="Ensembl"/>
</dbReference>
<dbReference type="CDD" id="cd00041">
    <property type="entry name" value="CUB"/>
    <property type="match status" value="2"/>
</dbReference>
<dbReference type="CDD" id="cd00057">
    <property type="entry name" value="FA58C"/>
    <property type="match status" value="2"/>
</dbReference>
<dbReference type="CDD" id="cd06263">
    <property type="entry name" value="MAM"/>
    <property type="match status" value="1"/>
</dbReference>
<dbReference type="FunFam" id="2.60.120.260:FF:000002">
    <property type="entry name" value="Coagulation factor VIII"/>
    <property type="match status" value="1"/>
</dbReference>
<dbReference type="FunFam" id="2.60.120.200:FF:000043">
    <property type="entry name" value="Neuropilin"/>
    <property type="match status" value="1"/>
</dbReference>
<dbReference type="FunFam" id="2.60.120.260:FF:000013">
    <property type="entry name" value="Neuropilin"/>
    <property type="match status" value="1"/>
</dbReference>
<dbReference type="FunFam" id="2.60.120.290:FF:000003">
    <property type="entry name" value="Neuropilin"/>
    <property type="match status" value="1"/>
</dbReference>
<dbReference type="FunFam" id="2.60.120.290:FF:000010">
    <property type="entry name" value="Neuropilin"/>
    <property type="match status" value="1"/>
</dbReference>
<dbReference type="Gene3D" id="2.60.120.200">
    <property type="match status" value="1"/>
</dbReference>
<dbReference type="Gene3D" id="2.60.120.260">
    <property type="entry name" value="Galactose-binding domain-like"/>
    <property type="match status" value="2"/>
</dbReference>
<dbReference type="Gene3D" id="2.60.120.290">
    <property type="entry name" value="Spermadhesin, CUB domain"/>
    <property type="match status" value="2"/>
</dbReference>
<dbReference type="InterPro" id="IPR013320">
    <property type="entry name" value="ConA-like_dom_sf"/>
</dbReference>
<dbReference type="InterPro" id="IPR000859">
    <property type="entry name" value="CUB_dom"/>
</dbReference>
<dbReference type="InterPro" id="IPR000421">
    <property type="entry name" value="FA58C"/>
</dbReference>
<dbReference type="InterPro" id="IPR008979">
    <property type="entry name" value="Galactose-bd-like_sf"/>
</dbReference>
<dbReference type="InterPro" id="IPR000998">
    <property type="entry name" value="MAM_dom"/>
</dbReference>
<dbReference type="InterPro" id="IPR014648">
    <property type="entry name" value="Neuropilin"/>
</dbReference>
<dbReference type="InterPro" id="IPR022579">
    <property type="entry name" value="Neuropilin_C"/>
</dbReference>
<dbReference type="InterPro" id="IPR050633">
    <property type="entry name" value="Neuropilin_MCO_CoagFactor"/>
</dbReference>
<dbReference type="InterPro" id="IPR035914">
    <property type="entry name" value="Sperma_CUB_dom_sf"/>
</dbReference>
<dbReference type="PANTHER" id="PTHR46806">
    <property type="entry name" value="F5/8 TYPE C DOMAIN-CONTAINING PROTEIN"/>
    <property type="match status" value="1"/>
</dbReference>
<dbReference type="PANTHER" id="PTHR46806:SF4">
    <property type="entry name" value="NEUROPILIN-1"/>
    <property type="match status" value="1"/>
</dbReference>
<dbReference type="Pfam" id="PF00431">
    <property type="entry name" value="CUB"/>
    <property type="match status" value="2"/>
</dbReference>
<dbReference type="Pfam" id="PF11980">
    <property type="entry name" value="DUF3481"/>
    <property type="match status" value="1"/>
</dbReference>
<dbReference type="Pfam" id="PF00754">
    <property type="entry name" value="F5_F8_type_C"/>
    <property type="match status" value="2"/>
</dbReference>
<dbReference type="Pfam" id="PF00629">
    <property type="entry name" value="MAM"/>
    <property type="match status" value="1"/>
</dbReference>
<dbReference type="PIRSF" id="PIRSF036960">
    <property type="entry name" value="Neuropilin"/>
    <property type="match status" value="1"/>
</dbReference>
<dbReference type="PRINTS" id="PR00020">
    <property type="entry name" value="MAMDOMAIN"/>
</dbReference>
<dbReference type="SMART" id="SM00042">
    <property type="entry name" value="CUB"/>
    <property type="match status" value="2"/>
</dbReference>
<dbReference type="SMART" id="SM00231">
    <property type="entry name" value="FA58C"/>
    <property type="match status" value="2"/>
</dbReference>
<dbReference type="SMART" id="SM00137">
    <property type="entry name" value="MAM"/>
    <property type="match status" value="1"/>
</dbReference>
<dbReference type="SUPFAM" id="SSF49899">
    <property type="entry name" value="Concanavalin A-like lectins/glucanases"/>
    <property type="match status" value="1"/>
</dbReference>
<dbReference type="SUPFAM" id="SSF49785">
    <property type="entry name" value="Galactose-binding domain-like"/>
    <property type="match status" value="2"/>
</dbReference>
<dbReference type="SUPFAM" id="SSF49854">
    <property type="entry name" value="Spermadhesin, CUB domain"/>
    <property type="match status" value="2"/>
</dbReference>
<dbReference type="PROSITE" id="PS01180">
    <property type="entry name" value="CUB"/>
    <property type="match status" value="2"/>
</dbReference>
<dbReference type="PROSITE" id="PS01285">
    <property type="entry name" value="FA58C_1"/>
    <property type="match status" value="2"/>
</dbReference>
<dbReference type="PROSITE" id="PS01286">
    <property type="entry name" value="FA58C_2"/>
    <property type="match status" value="2"/>
</dbReference>
<dbReference type="PROSITE" id="PS50022">
    <property type="entry name" value="FA58C_3"/>
    <property type="match status" value="2"/>
</dbReference>
<dbReference type="PROSITE" id="PS00740">
    <property type="entry name" value="MAM_1"/>
    <property type="match status" value="1"/>
</dbReference>
<dbReference type="PROSITE" id="PS50060">
    <property type="entry name" value="MAM_2"/>
    <property type="match status" value="1"/>
</dbReference>
<proteinExistence type="evidence at protein level"/>
<sequence length="923" mass="103000">MERGLPLLCATLALALALAGAFRSDKCGGTIKIENPGYLTSPGYPHSYHPSEKCEWLIQAPEPYQRIMINFNPHFDLEDRDCKYDYVEVIDGENEGGRLWGKFCGKIAPSPVVSSGPFLFIKFVSDYETHGAGFSIRYEIFKRGPECSQNYTAPTGVIKSPGFPEKYPNSLECTYIIFAPKMSEIILEFESFDLEQDSNPPGGMFCRYDRLEIWDGFPEVGPHIGRYCGQKTPGRIRSSSGVLSMVFYTDSAIAKEGFSANYSVLQSSISEDFKCMEALGMESGEIHSDQITASSQYGTNWSVERSRLNYPENGWTPGEDSYKEWIQVDLGLLRFVTAVGTQGAISKETKKKYYVKTYRVDISSNGEDWISLKEGNKAIIFQGNTNPTDVVLGVFSKPLITRFVRIKPVSWETGISMRFEVYGCKITDYPCSGMLGMVSGLISDSQITASNQADRNWMPENIRLVTSRTGWALPPSPHPYTNEWLQVDLGDEKIVRGVIIQGGKHRENKVFMRKFKIAYSNNGSDWKTIMDDSKRKAKSFEGNNNYDTPELRTFSPLSTRFIRIYPERATHSGLGLRMELLGCEVEAPTAGPTTPNGNPVDECDDDQANCHSGTGDDFQLTGGTTVLATEKPTIIDSTIQSEFPTYGFNCEFGWGSHKTFCHWEHDSHAQLRWSVLTSKTGPIQDHTGDGNFIYSQADENQKGKVARLVSPVVYSQSSAHCMTFWYHMSGSHVGTLRVKLRYQKPEEYDQLVWMVVGHQGDHWKEGRVLLHKSLKLYQVIFEGEIGKGNLGGIAVDDISINNHISQEDCAKPTDLDKKNTEIKIDETGSTPGYEGEGEGDKNISRKPGNVLKTLDPILITIIAMSALGVLLGAVCGVVLYCACWHNGMSERNLSALENYNFELVDGVKLKKDKLNPQSNYSEA</sequence>
<protein>
    <recommendedName>
        <fullName>Neuropilin-1</fullName>
    </recommendedName>
    <alternativeName>
        <fullName>A5 protein</fullName>
    </alternativeName>
    <cdAntigenName>CD304</cdAntigenName>
</protein>
<organism>
    <name type="scientific">Mus musculus</name>
    <name type="common">Mouse</name>
    <dbReference type="NCBI Taxonomy" id="10090"/>
    <lineage>
        <taxon>Eukaryota</taxon>
        <taxon>Metazoa</taxon>
        <taxon>Chordata</taxon>
        <taxon>Craniata</taxon>
        <taxon>Vertebrata</taxon>
        <taxon>Euteleostomi</taxon>
        <taxon>Mammalia</taxon>
        <taxon>Eutheria</taxon>
        <taxon>Euarchontoglires</taxon>
        <taxon>Glires</taxon>
        <taxon>Rodentia</taxon>
        <taxon>Myomorpha</taxon>
        <taxon>Muroidea</taxon>
        <taxon>Muridae</taxon>
        <taxon>Murinae</taxon>
        <taxon>Mus</taxon>
        <taxon>Mus</taxon>
    </lineage>
</organism>
<reference key="1">
    <citation type="journal article" date="1996" name="J. Neurobiol.">
        <title>Developmentally regulated expression of a cell surface protein, neuropilin, in the mouse nervous system.</title>
        <authorList>
            <person name="Kawakami A."/>
            <person name="Kitsukawa T."/>
            <person name="Takagi S."/>
            <person name="Fujisawa H."/>
        </authorList>
    </citation>
    <scope>NUCLEOTIDE SEQUENCE [MRNA]</scope>
    <source>
        <strain>BALB/cJ</strain>
        <tissue>Embryonic brain</tissue>
    </source>
</reference>
<reference key="2">
    <citation type="submission" date="2005-07" db="EMBL/GenBank/DDBJ databases">
        <authorList>
            <person name="Mural R.J."/>
            <person name="Adams M.D."/>
            <person name="Myers E.W."/>
            <person name="Smith H.O."/>
            <person name="Venter J.C."/>
        </authorList>
    </citation>
    <scope>NUCLEOTIDE SEQUENCE [LARGE SCALE GENOMIC DNA]</scope>
</reference>
<reference key="3">
    <citation type="journal article" date="2004" name="Genome Res.">
        <title>The status, quality, and expansion of the NIH full-length cDNA project: the Mammalian Gene Collection (MGC).</title>
        <authorList>
            <consortium name="The MGC Project Team"/>
        </authorList>
    </citation>
    <scope>NUCLEOTIDE SEQUENCE [LARGE SCALE MRNA]</scope>
    <source>
        <strain>C57BL/6J</strain>
        <tissue>Brain</tissue>
    </source>
</reference>
<reference key="4">
    <citation type="journal article" date="2009" name="Mol. Cell. Proteomics">
        <title>The mouse C2C12 myoblast cell surface N-linked glycoproteome: identification, glycosite occupancy, and membrane orientation.</title>
        <authorList>
            <person name="Gundry R.L."/>
            <person name="Raginski K."/>
            <person name="Tarasova Y."/>
            <person name="Tchernyshyov I."/>
            <person name="Bausch-Fluck D."/>
            <person name="Elliott S.T."/>
            <person name="Boheler K.R."/>
            <person name="Van Eyk J.E."/>
            <person name="Wollscheid B."/>
        </authorList>
    </citation>
    <scope>GLYCOSYLATION [LARGE SCALE ANALYSIS] AT ASN-261 AND ASN-522</scope>
    <source>
        <tissue>Myoblast</tissue>
    </source>
</reference>
<reference key="5">
    <citation type="journal article" date="2010" name="Cell">
        <title>A tissue-specific atlas of mouse protein phosphorylation and expression.</title>
        <authorList>
            <person name="Huttlin E.L."/>
            <person name="Jedrychowski M.P."/>
            <person name="Elias J.E."/>
            <person name="Goswami T."/>
            <person name="Rad R."/>
            <person name="Beausoleil S.A."/>
            <person name="Villen J."/>
            <person name="Haas W."/>
            <person name="Sowa M.E."/>
            <person name="Gygi S.P."/>
        </authorList>
    </citation>
    <scope>PHOSPHORYLATION [LARGE SCALE ANALYSIS] AT SER-894</scope>
    <scope>IDENTIFICATION BY MASS SPECTROMETRY [LARGE SCALE ANALYSIS]</scope>
    <source>
        <tissue>Brain</tissue>
        <tissue>Brown adipose tissue</tissue>
        <tissue>Heart</tissue>
        <tissue>Kidney</tissue>
        <tissue>Liver</tissue>
        <tissue>Lung</tissue>
        <tissue>Pancreas</tissue>
        <tissue>Spleen</tissue>
        <tissue>Testis</tissue>
    </source>
</reference>
<reference key="6">
    <citation type="journal article" date="2010" name="J. Biol. Chem.">
        <title>Neuropilin 1 directly interacts with Fer kinase to mediate semaphorin 3A-induced death of cortical neurons.</title>
        <authorList>
            <person name="Jiang S.X."/>
            <person name="Whitehead S."/>
            <person name="Aylsworth A."/>
            <person name="Slinn J."/>
            <person name="Zurakowski B."/>
            <person name="Chan K."/>
            <person name="Li J."/>
            <person name="Hou S.T."/>
        </authorList>
    </citation>
    <scope>INTERACTION WITH FER</scope>
</reference>
<reference key="7">
    <citation type="journal article" date="2015" name="Nature">
        <title>CMT2D neuropathy is linked to the neomorphic binding activity of glycyl-tRNA synthetase.</title>
        <authorList>
            <person name="He W."/>
            <person name="Bai G."/>
            <person name="Zhou H."/>
            <person name="Wei N."/>
            <person name="White N.M."/>
            <person name="Lauer J."/>
            <person name="Liu H."/>
            <person name="Shi Y."/>
            <person name="Dumitru C.D."/>
            <person name="Lettieri K."/>
            <person name="Shubayev V."/>
            <person name="Jordanova A."/>
            <person name="Guergueltcheva V."/>
            <person name="Griffin P.R."/>
            <person name="Burgess R.W."/>
            <person name="Pfaff S.L."/>
            <person name="Yang X.L."/>
        </authorList>
    </citation>
    <scope>FUNCTION</scope>
</reference>
<reference key="8">
    <citation type="journal article" date="2016" name="Nature">
        <title>Corrigendum: CMT2D neuropathy is linked to the neomorphic binding activity of glycyl-tRNA synthetase.</title>
        <authorList>
            <person name="He W."/>
            <person name="Bai G."/>
            <person name="Zhou H."/>
            <person name="Wei N."/>
            <person name="White N.M."/>
            <person name="Lauer J."/>
            <person name="Liu H."/>
            <person name="Shi Y."/>
            <person name="Dan Dumitru C."/>
            <person name="Lettieri K."/>
            <person name="Shubayev V."/>
            <person name="Jordanova A."/>
            <person name="Guergueltcheva V."/>
            <person name="Griffin P.R."/>
            <person name="Burgess R.W."/>
            <person name="Pfaff S.L."/>
            <person name="Yang X.L."/>
        </authorList>
    </citation>
    <scope>ERRATUM OF PUBMED:26503042</scope>
</reference>
<reference key="9">
    <citation type="journal article" date="2019" name="IScience">
        <title>Neuropilin-1 Controls Endothelial Homeostasis by Regulating Mitochondrial Function and Iron-Dependent Oxidative Stress.</title>
        <authorList>
            <person name="Issitt T."/>
            <person name="Bosseboeuf E."/>
            <person name="De Winter N."/>
            <person name="Dufton N."/>
            <person name="Gestri G."/>
            <person name="Senatore V."/>
            <person name="Chikh A."/>
            <person name="Randi A.M."/>
            <person name="Raimondi C."/>
        </authorList>
    </citation>
    <scope>FUNCTION</scope>
    <scope>DISRUPTION PHENOTYPE</scope>
</reference>